<comment type="function">
    <text evidence="1">NDH-1 shuttles electrons from NADH, via FMN and iron-sulfur (Fe-S) centers, to quinones in the respiratory chain. The immediate electron acceptor for the enzyme in this species is believed to be ubiquinone. Couples the redox reaction to proton translocation (for every two electrons transferred, four hydrogen ions are translocated across the cytoplasmic membrane), and thus conserves the redox energy in a proton gradient.</text>
</comment>
<comment type="catalytic activity">
    <reaction evidence="1">
        <text>a quinone + NADH + 5 H(+)(in) = a quinol + NAD(+) + 4 H(+)(out)</text>
        <dbReference type="Rhea" id="RHEA:57888"/>
        <dbReference type="ChEBI" id="CHEBI:15378"/>
        <dbReference type="ChEBI" id="CHEBI:24646"/>
        <dbReference type="ChEBI" id="CHEBI:57540"/>
        <dbReference type="ChEBI" id="CHEBI:57945"/>
        <dbReference type="ChEBI" id="CHEBI:132124"/>
    </reaction>
</comment>
<comment type="cofactor">
    <cofactor evidence="1">
        <name>[4Fe-4S] cluster</name>
        <dbReference type="ChEBI" id="CHEBI:49883"/>
    </cofactor>
    <text evidence="1">Binds 1 [4Fe-4S] cluster.</text>
</comment>
<comment type="subunit">
    <text evidence="1">NDH-1 is composed of 14 different subunits. Subunits NuoB, C, D, E, F, and G constitute the peripheral sector of the complex.</text>
</comment>
<comment type="subcellular location">
    <subcellularLocation>
        <location evidence="1">Cell inner membrane</location>
        <topology evidence="1">Peripheral membrane protein</topology>
        <orientation evidence="1">Cytoplasmic side</orientation>
    </subcellularLocation>
</comment>
<comment type="similarity">
    <text evidence="1">Belongs to the complex I 20 kDa subunit family.</text>
</comment>
<accession>A5WG47</accession>
<evidence type="ECO:0000255" key="1">
    <source>
        <dbReference type="HAMAP-Rule" id="MF_01356"/>
    </source>
</evidence>
<protein>
    <recommendedName>
        <fullName evidence="1">NADH-quinone oxidoreductase subunit B</fullName>
        <ecNumber evidence="1">7.1.1.-</ecNumber>
    </recommendedName>
    <alternativeName>
        <fullName evidence="1">NADH dehydrogenase I subunit B</fullName>
    </alternativeName>
    <alternativeName>
        <fullName evidence="1">NDH-1 subunit B</fullName>
    </alternativeName>
</protein>
<gene>
    <name evidence="1" type="primary">nuoB</name>
    <name type="ordered locus">PsycPRwf_1698</name>
</gene>
<dbReference type="EC" id="7.1.1.-" evidence="1"/>
<dbReference type="EMBL" id="CP000713">
    <property type="protein sequence ID" value="ABQ94638.1"/>
    <property type="molecule type" value="Genomic_DNA"/>
</dbReference>
<dbReference type="SMR" id="A5WG47"/>
<dbReference type="STRING" id="349106.PsycPRwf_1698"/>
<dbReference type="KEGG" id="prw:PsycPRwf_1698"/>
<dbReference type="eggNOG" id="COG0377">
    <property type="taxonomic scope" value="Bacteria"/>
</dbReference>
<dbReference type="HOGENOM" id="CLU_055737_7_3_6"/>
<dbReference type="GO" id="GO:0005886">
    <property type="term" value="C:plasma membrane"/>
    <property type="evidence" value="ECO:0007669"/>
    <property type="project" value="UniProtKB-SubCell"/>
</dbReference>
<dbReference type="GO" id="GO:0045271">
    <property type="term" value="C:respiratory chain complex I"/>
    <property type="evidence" value="ECO:0007669"/>
    <property type="project" value="TreeGrafter"/>
</dbReference>
<dbReference type="GO" id="GO:0051539">
    <property type="term" value="F:4 iron, 4 sulfur cluster binding"/>
    <property type="evidence" value="ECO:0007669"/>
    <property type="project" value="UniProtKB-KW"/>
</dbReference>
<dbReference type="GO" id="GO:0005506">
    <property type="term" value="F:iron ion binding"/>
    <property type="evidence" value="ECO:0007669"/>
    <property type="project" value="UniProtKB-UniRule"/>
</dbReference>
<dbReference type="GO" id="GO:0008137">
    <property type="term" value="F:NADH dehydrogenase (ubiquinone) activity"/>
    <property type="evidence" value="ECO:0007669"/>
    <property type="project" value="InterPro"/>
</dbReference>
<dbReference type="GO" id="GO:0050136">
    <property type="term" value="F:NADH:ubiquinone reductase (non-electrogenic) activity"/>
    <property type="evidence" value="ECO:0007669"/>
    <property type="project" value="UniProtKB-UniRule"/>
</dbReference>
<dbReference type="GO" id="GO:0048038">
    <property type="term" value="F:quinone binding"/>
    <property type="evidence" value="ECO:0007669"/>
    <property type="project" value="UniProtKB-KW"/>
</dbReference>
<dbReference type="GO" id="GO:0009060">
    <property type="term" value="P:aerobic respiration"/>
    <property type="evidence" value="ECO:0007669"/>
    <property type="project" value="TreeGrafter"/>
</dbReference>
<dbReference type="GO" id="GO:0015990">
    <property type="term" value="P:electron transport coupled proton transport"/>
    <property type="evidence" value="ECO:0007669"/>
    <property type="project" value="TreeGrafter"/>
</dbReference>
<dbReference type="FunFam" id="3.40.50.12280:FF:000002">
    <property type="entry name" value="NADH-quinone oxidoreductase subunit B"/>
    <property type="match status" value="1"/>
</dbReference>
<dbReference type="Gene3D" id="3.40.50.12280">
    <property type="match status" value="1"/>
</dbReference>
<dbReference type="HAMAP" id="MF_01356">
    <property type="entry name" value="NDH1_NuoB"/>
    <property type="match status" value="1"/>
</dbReference>
<dbReference type="InterPro" id="IPR006137">
    <property type="entry name" value="NADH_UbQ_OxRdtase-like_20kDa"/>
</dbReference>
<dbReference type="InterPro" id="IPR006138">
    <property type="entry name" value="NADH_UQ_OxRdtase_20Kd_su"/>
</dbReference>
<dbReference type="NCBIfam" id="TIGR01957">
    <property type="entry name" value="nuoB_fam"/>
    <property type="match status" value="1"/>
</dbReference>
<dbReference type="NCBIfam" id="NF005012">
    <property type="entry name" value="PRK06411.1"/>
    <property type="match status" value="1"/>
</dbReference>
<dbReference type="PANTHER" id="PTHR11995">
    <property type="entry name" value="NADH DEHYDROGENASE"/>
    <property type="match status" value="1"/>
</dbReference>
<dbReference type="PANTHER" id="PTHR11995:SF14">
    <property type="entry name" value="NADH DEHYDROGENASE [UBIQUINONE] IRON-SULFUR PROTEIN 7, MITOCHONDRIAL"/>
    <property type="match status" value="1"/>
</dbReference>
<dbReference type="Pfam" id="PF01058">
    <property type="entry name" value="Oxidored_q6"/>
    <property type="match status" value="1"/>
</dbReference>
<dbReference type="SUPFAM" id="SSF56770">
    <property type="entry name" value="HydA/Nqo6-like"/>
    <property type="match status" value="1"/>
</dbReference>
<dbReference type="PROSITE" id="PS01150">
    <property type="entry name" value="COMPLEX1_20K"/>
    <property type="match status" value="1"/>
</dbReference>
<organism>
    <name type="scientific">Psychrobacter sp. (strain PRwf-1)</name>
    <dbReference type="NCBI Taxonomy" id="349106"/>
    <lineage>
        <taxon>Bacteria</taxon>
        <taxon>Pseudomonadati</taxon>
        <taxon>Pseudomonadota</taxon>
        <taxon>Gammaproteobacteria</taxon>
        <taxon>Moraxellales</taxon>
        <taxon>Moraxellaceae</taxon>
        <taxon>Psychrobacter</taxon>
    </lineage>
</organism>
<feature type="chain" id="PRO_0000376323" description="NADH-quinone oxidoreductase subunit B">
    <location>
        <begin position="1"/>
        <end position="222"/>
    </location>
</feature>
<feature type="binding site" evidence="1">
    <location>
        <position position="65"/>
    </location>
    <ligand>
        <name>[4Fe-4S] cluster</name>
        <dbReference type="ChEBI" id="CHEBI:49883"/>
    </ligand>
</feature>
<feature type="binding site" evidence="1">
    <location>
        <position position="66"/>
    </location>
    <ligand>
        <name>[4Fe-4S] cluster</name>
        <dbReference type="ChEBI" id="CHEBI:49883"/>
    </ligand>
</feature>
<feature type="binding site" evidence="1">
    <location>
        <position position="131"/>
    </location>
    <ligand>
        <name>[4Fe-4S] cluster</name>
        <dbReference type="ChEBI" id="CHEBI:49883"/>
    </ligand>
</feature>
<feature type="binding site" evidence="1">
    <location>
        <position position="160"/>
    </location>
    <ligand>
        <name>[4Fe-4S] cluster</name>
        <dbReference type="ChEBI" id="CHEBI:49883"/>
    </ligand>
</feature>
<name>NUOB_PSYWF</name>
<proteinExistence type="inferred from homology"/>
<sequence length="222" mass="24951">MKYTLTRANPDADTYPAQTRQTVNNPIEDEVNRNVFMGKLEDMVHASANWGRKNSLWPFNFGTSCCYVEYATTLTAVHDLSRFGAEVIRASPRQADVMIVAGTCFVKMAPVIQRLYEQMLEPKWVISMGSCANSGGMYDIYSVVQGVDKIIPVDVYVPGCPPRPEALIQGLMLLQESITKERRPLGAYVNDKGIYQPQMLPERDRKQADRIAVKNLRSPDSI</sequence>
<reference key="1">
    <citation type="submission" date="2007-05" db="EMBL/GenBank/DDBJ databases">
        <title>Complete sequence of chromosome of Psychrobacter sp. PRwf-1.</title>
        <authorList>
            <consortium name="US DOE Joint Genome Institute"/>
            <person name="Copeland A."/>
            <person name="Lucas S."/>
            <person name="Lapidus A."/>
            <person name="Barry K."/>
            <person name="Detter J.C."/>
            <person name="Glavina del Rio T."/>
            <person name="Hammon N."/>
            <person name="Israni S."/>
            <person name="Dalin E."/>
            <person name="Tice H."/>
            <person name="Pitluck S."/>
            <person name="Chain P."/>
            <person name="Malfatti S."/>
            <person name="Shin M."/>
            <person name="Vergez L."/>
            <person name="Schmutz J."/>
            <person name="Larimer F."/>
            <person name="Land M."/>
            <person name="Hauser L."/>
            <person name="Kyrpides N."/>
            <person name="Kim E."/>
            <person name="Tiedje J."/>
            <person name="Richardson P."/>
        </authorList>
    </citation>
    <scope>NUCLEOTIDE SEQUENCE [LARGE SCALE GENOMIC DNA]</scope>
    <source>
        <strain>PRwf-1</strain>
    </source>
</reference>
<keyword id="KW-0004">4Fe-4S</keyword>
<keyword id="KW-0997">Cell inner membrane</keyword>
<keyword id="KW-1003">Cell membrane</keyword>
<keyword id="KW-0408">Iron</keyword>
<keyword id="KW-0411">Iron-sulfur</keyword>
<keyword id="KW-0472">Membrane</keyword>
<keyword id="KW-0479">Metal-binding</keyword>
<keyword id="KW-0520">NAD</keyword>
<keyword id="KW-0874">Quinone</keyword>
<keyword id="KW-1278">Translocase</keyword>
<keyword id="KW-0813">Transport</keyword>
<keyword id="KW-0830">Ubiquinone</keyword>